<protein>
    <recommendedName>
        <fullName evidence="1">Large ribosomal subunit protein bL34</fullName>
    </recommendedName>
    <alternativeName>
        <fullName evidence="3">50S ribosomal protein L34</fullName>
    </alternativeName>
</protein>
<organism>
    <name type="scientific">Streptococcus pneumoniae (strain 70585)</name>
    <dbReference type="NCBI Taxonomy" id="488221"/>
    <lineage>
        <taxon>Bacteria</taxon>
        <taxon>Bacillati</taxon>
        <taxon>Bacillota</taxon>
        <taxon>Bacilli</taxon>
        <taxon>Lactobacillales</taxon>
        <taxon>Streptococcaceae</taxon>
        <taxon>Streptococcus</taxon>
    </lineage>
</organism>
<name>RL34_STRP7</name>
<comment type="similarity">
    <text evidence="1">Belongs to the bacterial ribosomal protein bL34 family.</text>
</comment>
<sequence length="44" mass="5265">MKRTYQPSKLRRARKHGFRNRMSTKNGRRVLAARRRKGRKVLAA</sequence>
<reference key="1">
    <citation type="journal article" date="2010" name="Genome Biol.">
        <title>Structure and dynamics of the pan-genome of Streptococcus pneumoniae and closely related species.</title>
        <authorList>
            <person name="Donati C."/>
            <person name="Hiller N.L."/>
            <person name="Tettelin H."/>
            <person name="Muzzi A."/>
            <person name="Croucher N.J."/>
            <person name="Angiuoli S.V."/>
            <person name="Oggioni M."/>
            <person name="Dunning Hotopp J.C."/>
            <person name="Hu F.Z."/>
            <person name="Riley D.R."/>
            <person name="Covacci A."/>
            <person name="Mitchell T.J."/>
            <person name="Bentley S.D."/>
            <person name="Kilian M."/>
            <person name="Ehrlich G.D."/>
            <person name="Rappuoli R."/>
            <person name="Moxon E.R."/>
            <person name="Masignani V."/>
        </authorList>
    </citation>
    <scope>NUCLEOTIDE SEQUENCE [LARGE SCALE GENOMIC DNA]</scope>
    <source>
        <strain>70585</strain>
    </source>
</reference>
<proteinExistence type="inferred from homology"/>
<feature type="chain" id="PRO_1000196117" description="Large ribosomal subunit protein bL34">
    <location>
        <begin position="1"/>
        <end position="44"/>
    </location>
</feature>
<feature type="region of interest" description="Disordered" evidence="2">
    <location>
        <begin position="1"/>
        <end position="44"/>
    </location>
</feature>
<feature type="compositionally biased region" description="Basic residues" evidence="2">
    <location>
        <begin position="1"/>
        <end position="19"/>
    </location>
</feature>
<feature type="compositionally biased region" description="Basic residues" evidence="2">
    <location>
        <begin position="26"/>
        <end position="44"/>
    </location>
</feature>
<dbReference type="EMBL" id="CP000918">
    <property type="protein sequence ID" value="ACO17533.1"/>
    <property type="molecule type" value="Genomic_DNA"/>
</dbReference>
<dbReference type="RefSeq" id="WP_000831905.1">
    <property type="nucleotide sequence ID" value="NC_012468.1"/>
</dbReference>
<dbReference type="SMR" id="C1CA38"/>
<dbReference type="GeneID" id="93738550"/>
<dbReference type="KEGG" id="snm:SP70585_2065"/>
<dbReference type="HOGENOM" id="CLU_129938_2_0_9"/>
<dbReference type="Proteomes" id="UP000002211">
    <property type="component" value="Chromosome"/>
</dbReference>
<dbReference type="GO" id="GO:1990904">
    <property type="term" value="C:ribonucleoprotein complex"/>
    <property type="evidence" value="ECO:0007669"/>
    <property type="project" value="UniProtKB-KW"/>
</dbReference>
<dbReference type="GO" id="GO:0005840">
    <property type="term" value="C:ribosome"/>
    <property type="evidence" value="ECO:0007669"/>
    <property type="project" value="UniProtKB-KW"/>
</dbReference>
<dbReference type="GO" id="GO:0003735">
    <property type="term" value="F:structural constituent of ribosome"/>
    <property type="evidence" value="ECO:0007669"/>
    <property type="project" value="InterPro"/>
</dbReference>
<dbReference type="GO" id="GO:0006412">
    <property type="term" value="P:translation"/>
    <property type="evidence" value="ECO:0007669"/>
    <property type="project" value="UniProtKB-UniRule"/>
</dbReference>
<dbReference type="FunFam" id="1.10.287.3980:FF:000001">
    <property type="entry name" value="Mitochondrial ribosomal protein L34"/>
    <property type="match status" value="1"/>
</dbReference>
<dbReference type="Gene3D" id="1.10.287.3980">
    <property type="match status" value="1"/>
</dbReference>
<dbReference type="HAMAP" id="MF_00391">
    <property type="entry name" value="Ribosomal_bL34"/>
    <property type="match status" value="1"/>
</dbReference>
<dbReference type="InterPro" id="IPR000271">
    <property type="entry name" value="Ribosomal_bL34"/>
</dbReference>
<dbReference type="InterPro" id="IPR020939">
    <property type="entry name" value="Ribosomal_bL34_CS"/>
</dbReference>
<dbReference type="NCBIfam" id="TIGR01030">
    <property type="entry name" value="rpmH_bact"/>
    <property type="match status" value="1"/>
</dbReference>
<dbReference type="PANTHER" id="PTHR14503:SF4">
    <property type="entry name" value="LARGE RIBOSOMAL SUBUNIT PROTEIN BL34M"/>
    <property type="match status" value="1"/>
</dbReference>
<dbReference type="PANTHER" id="PTHR14503">
    <property type="entry name" value="MITOCHONDRIAL RIBOSOMAL PROTEIN 34 FAMILY MEMBER"/>
    <property type="match status" value="1"/>
</dbReference>
<dbReference type="Pfam" id="PF00468">
    <property type="entry name" value="Ribosomal_L34"/>
    <property type="match status" value="1"/>
</dbReference>
<dbReference type="PROSITE" id="PS00784">
    <property type="entry name" value="RIBOSOMAL_L34"/>
    <property type="match status" value="1"/>
</dbReference>
<evidence type="ECO:0000255" key="1">
    <source>
        <dbReference type="HAMAP-Rule" id="MF_00391"/>
    </source>
</evidence>
<evidence type="ECO:0000256" key="2">
    <source>
        <dbReference type="SAM" id="MobiDB-lite"/>
    </source>
</evidence>
<evidence type="ECO:0000305" key="3"/>
<gene>
    <name evidence="1" type="primary">rpmH</name>
    <name type="ordered locus">SP70585_2065</name>
</gene>
<accession>C1CA38</accession>
<keyword id="KW-0687">Ribonucleoprotein</keyword>
<keyword id="KW-0689">Ribosomal protein</keyword>